<dbReference type="EMBL" id="BC093467">
    <property type="protein sequence ID" value="AAH93467.1"/>
    <property type="molecule type" value="mRNA"/>
</dbReference>
<dbReference type="RefSeq" id="NP_001025678.1">
    <property type="nucleotide sequence ID" value="NM_001030507.1"/>
</dbReference>
<dbReference type="FunCoup" id="Q566L4">
    <property type="interactions" value="1180"/>
</dbReference>
<dbReference type="STRING" id="8364.ENSXETP00000041331"/>
<dbReference type="PaxDb" id="8364-ENSXETP00000052626"/>
<dbReference type="DNASU" id="595070"/>
<dbReference type="GeneID" id="595070"/>
<dbReference type="KEGG" id="xtr:595070"/>
<dbReference type="AGR" id="Xenbase:XB-GENE-1217460"/>
<dbReference type="CTD" id="80139"/>
<dbReference type="Xenbase" id="XB-GENE-1217460">
    <property type="gene designation" value="znf703"/>
</dbReference>
<dbReference type="eggNOG" id="ENOG502QV57">
    <property type="taxonomic scope" value="Eukaryota"/>
</dbReference>
<dbReference type="HOGENOM" id="CLU_035082_1_0_1"/>
<dbReference type="InParanoid" id="Q566L4"/>
<dbReference type="OMA" id="SQAPHMD"/>
<dbReference type="OrthoDB" id="10054079at2759"/>
<dbReference type="Proteomes" id="UP000008143">
    <property type="component" value="Chromosome 3"/>
</dbReference>
<dbReference type="Bgee" id="ENSXETG00000024347">
    <property type="expression patterns" value="Expressed in neurula embryo and 14 other cell types or tissues"/>
</dbReference>
<dbReference type="GO" id="GO:0005737">
    <property type="term" value="C:cytoplasm"/>
    <property type="evidence" value="ECO:0000250"/>
    <property type="project" value="UniProtKB"/>
</dbReference>
<dbReference type="GO" id="GO:0016363">
    <property type="term" value="C:nuclear matrix"/>
    <property type="evidence" value="ECO:0000250"/>
    <property type="project" value="UniProtKB"/>
</dbReference>
<dbReference type="GO" id="GO:0005634">
    <property type="term" value="C:nucleus"/>
    <property type="evidence" value="ECO:0000250"/>
    <property type="project" value="UniProtKB"/>
</dbReference>
<dbReference type="GO" id="GO:0008270">
    <property type="term" value="F:zinc ion binding"/>
    <property type="evidence" value="ECO:0007669"/>
    <property type="project" value="UniProtKB-KW"/>
</dbReference>
<dbReference type="GO" id="GO:0034333">
    <property type="term" value="P:adherens junction assembly"/>
    <property type="evidence" value="ECO:0000250"/>
    <property type="project" value="UniProtKB"/>
</dbReference>
<dbReference type="GO" id="GO:0045892">
    <property type="term" value="P:negative regulation of DNA-templated transcription"/>
    <property type="evidence" value="ECO:0000250"/>
    <property type="project" value="UniProtKB"/>
</dbReference>
<dbReference type="GO" id="GO:0034111">
    <property type="term" value="P:negative regulation of homotypic cell-cell adhesion"/>
    <property type="evidence" value="ECO:0000250"/>
    <property type="project" value="UniProtKB"/>
</dbReference>
<dbReference type="GO" id="GO:0030335">
    <property type="term" value="P:positive regulation of cell migration"/>
    <property type="evidence" value="ECO:0000250"/>
    <property type="project" value="UniProtKB"/>
</dbReference>
<dbReference type="GO" id="GO:0060828">
    <property type="term" value="P:regulation of canonical Wnt signaling pathway"/>
    <property type="evidence" value="ECO:0000250"/>
    <property type="project" value="UniProtKB"/>
</dbReference>
<dbReference type="GO" id="GO:0051726">
    <property type="term" value="P:regulation of cell cycle"/>
    <property type="evidence" value="ECO:0000250"/>
    <property type="project" value="UniProtKB"/>
</dbReference>
<dbReference type="GO" id="GO:0017015">
    <property type="term" value="P:regulation of transforming growth factor beta receptor signaling pathway"/>
    <property type="evidence" value="ECO:0000250"/>
    <property type="project" value="UniProtKB"/>
</dbReference>
<dbReference type="FunFam" id="3.30.160.60:FF:000129">
    <property type="entry name" value="Zinc finger protein 503"/>
    <property type="match status" value="1"/>
</dbReference>
<dbReference type="Gene3D" id="3.30.160.60">
    <property type="entry name" value="Classic Zinc Finger"/>
    <property type="match status" value="1"/>
</dbReference>
<dbReference type="InterPro" id="IPR051520">
    <property type="entry name" value="Elbow/Noc_ZnFinger"/>
</dbReference>
<dbReference type="InterPro" id="IPR022129">
    <property type="entry name" value="Tscrpt_rep_NocA-like"/>
</dbReference>
<dbReference type="InterPro" id="IPR013087">
    <property type="entry name" value="Znf_C2H2_type"/>
</dbReference>
<dbReference type="PANTHER" id="PTHR12522:SF2">
    <property type="entry name" value="ZINC FINGER PROTEIN 703"/>
    <property type="match status" value="1"/>
</dbReference>
<dbReference type="PANTHER" id="PTHR12522">
    <property type="entry name" value="ZINC-FINGER PROTEIN NOLZ1-RELATED"/>
    <property type="match status" value="1"/>
</dbReference>
<dbReference type="Pfam" id="PF12402">
    <property type="entry name" value="nlz1"/>
    <property type="match status" value="1"/>
</dbReference>
<dbReference type="PROSITE" id="PS50157">
    <property type="entry name" value="ZINC_FINGER_C2H2_2"/>
    <property type="match status" value="1"/>
</dbReference>
<gene>
    <name type="primary">znf703</name>
</gene>
<protein>
    <recommendedName>
        <fullName>Zinc finger protein 703</fullName>
    </recommendedName>
</protein>
<accession>Q566L4</accession>
<comment type="function">
    <text evidence="1 2">Transcriptional corepressor which does not bind directly to DNA and may regulate transcription through recruitment of histone deacetylases to gene promoters. Regulates cell adhesion, migration and proliferation (By similarity). Involved in specification of the lateral neural plate border (NPB) (By similarity). May be required for segmental gene expression during hindbrain development (By similarity).</text>
</comment>
<comment type="subcellular location">
    <subcellularLocation>
        <location evidence="2">Nucleus</location>
    </subcellularLocation>
    <subcellularLocation>
        <location evidence="2">Cytoplasm</location>
    </subcellularLocation>
</comment>
<comment type="similarity">
    <text evidence="5">Belongs to the Elbow/Noc family.</text>
</comment>
<keyword id="KW-0963">Cytoplasm</keyword>
<keyword id="KW-0217">Developmental protein</keyword>
<keyword id="KW-0479">Metal-binding</keyword>
<keyword id="KW-0539">Nucleus</keyword>
<keyword id="KW-1185">Reference proteome</keyword>
<keyword id="KW-0678">Repressor</keyword>
<keyword id="KW-0804">Transcription</keyword>
<keyword id="KW-0805">Transcription regulation</keyword>
<keyword id="KW-0862">Zinc</keyword>
<keyword id="KW-0863">Zinc-finger</keyword>
<name>ZN703_XENTR</name>
<proteinExistence type="evidence at transcript level"/>
<sequence length="537" mass="55789">MNCSPPGSSTDTERQSSSSGTPVAPRPTLAPTHPLRQANRLPIRLLKMLTAHTGHLLHPEYLQPLSSTPVSPIELDAKKSPLALLAQTCSQIGKPDPPPSSKLNSVTSSGLSEKESGRSSSLKLGESPLEDKSSFKPYSKGGESRKESGSSSGGAADKAGFRVPSGSCQPFPHAPSPSSRVSSPGQHCDSKNNESQEKKEPEANKANSETSQVNPTLTRASTSNSSAESSQSGDVTPISKADPPSLGSGHVAPVSPYKPGHSVFPLPPSGIGYHGSIVGAYAGYPSQFVPGLDHTKTSLVGNQLPGTLGLPGKPPSSSPLTGASPPSFMQGLCRDPYCLSYHNASHLGSSSCSTCVHDPSALKSGYPLVYPSHPLHSVHTTLSSSVTPSLPGHPLYTYGFMLPNDPVPHICNWVSASGPCDKRFSTSEELLAHLRTHTALPGADKLLAGYPTSTLGSAASCHLHLPPAGPGSPNTLPGSLSLRSPHSLGLSRYHPYGKGHLTTPSGLPLPSLPAGSYYSPYALYGQRLTSASALGYQ</sequence>
<organism>
    <name type="scientific">Xenopus tropicalis</name>
    <name type="common">Western clawed frog</name>
    <name type="synonym">Silurana tropicalis</name>
    <dbReference type="NCBI Taxonomy" id="8364"/>
    <lineage>
        <taxon>Eukaryota</taxon>
        <taxon>Metazoa</taxon>
        <taxon>Chordata</taxon>
        <taxon>Craniata</taxon>
        <taxon>Vertebrata</taxon>
        <taxon>Euteleostomi</taxon>
        <taxon>Amphibia</taxon>
        <taxon>Batrachia</taxon>
        <taxon>Anura</taxon>
        <taxon>Pipoidea</taxon>
        <taxon>Pipidae</taxon>
        <taxon>Xenopodinae</taxon>
        <taxon>Xenopus</taxon>
        <taxon>Silurana</taxon>
    </lineage>
</organism>
<feature type="chain" id="PRO_0000292211" description="Zinc finger protein 703">
    <location>
        <begin position="1"/>
        <end position="537"/>
    </location>
</feature>
<feature type="zinc finger region" description="C2H2-type" evidence="3">
    <location>
        <begin position="409"/>
        <end position="437"/>
    </location>
</feature>
<feature type="region of interest" description="Disordered" evidence="4">
    <location>
        <begin position="1"/>
        <end position="38"/>
    </location>
</feature>
<feature type="region of interest" description="Disordered" evidence="4">
    <location>
        <begin position="90"/>
        <end position="254"/>
    </location>
</feature>
<feature type="region of interest" description="Disordered" evidence="4">
    <location>
        <begin position="300"/>
        <end position="323"/>
    </location>
</feature>
<feature type="compositionally biased region" description="Polar residues" evidence="4">
    <location>
        <begin position="101"/>
        <end position="111"/>
    </location>
</feature>
<feature type="compositionally biased region" description="Low complexity" evidence="4">
    <location>
        <begin position="149"/>
        <end position="158"/>
    </location>
</feature>
<feature type="compositionally biased region" description="Polar residues" evidence="4">
    <location>
        <begin position="176"/>
        <end position="185"/>
    </location>
</feature>
<feature type="compositionally biased region" description="Basic and acidic residues" evidence="4">
    <location>
        <begin position="188"/>
        <end position="203"/>
    </location>
</feature>
<feature type="compositionally biased region" description="Polar residues" evidence="4">
    <location>
        <begin position="205"/>
        <end position="220"/>
    </location>
</feature>
<feature type="compositionally biased region" description="Low complexity" evidence="4">
    <location>
        <begin position="221"/>
        <end position="232"/>
    </location>
</feature>
<reference key="1">
    <citation type="submission" date="2005-04" db="EMBL/GenBank/DDBJ databases">
        <authorList>
            <consortium name="NIH - Xenopus Gene Collection (XGC) project"/>
        </authorList>
    </citation>
    <scope>NUCLEOTIDE SEQUENCE [LARGE SCALE MRNA]</scope>
    <source>
        <tissue>Embryo</tissue>
    </source>
</reference>
<evidence type="ECO:0000250" key="1">
    <source>
        <dbReference type="UniProtKB" id="Q7ZWN6"/>
    </source>
</evidence>
<evidence type="ECO:0000250" key="2">
    <source>
        <dbReference type="UniProtKB" id="Q9H7S9"/>
    </source>
</evidence>
<evidence type="ECO:0000255" key="3">
    <source>
        <dbReference type="PROSITE-ProRule" id="PRU00042"/>
    </source>
</evidence>
<evidence type="ECO:0000256" key="4">
    <source>
        <dbReference type="SAM" id="MobiDB-lite"/>
    </source>
</evidence>
<evidence type="ECO:0000305" key="5"/>